<organism>
    <name type="scientific">Vaccinia virus (strain Copenhagen)</name>
    <name type="common">VACV</name>
    <dbReference type="NCBI Taxonomy" id="10249"/>
    <lineage>
        <taxon>Viruses</taxon>
        <taxon>Varidnaviria</taxon>
        <taxon>Bamfordvirae</taxon>
        <taxon>Nucleocytoviricota</taxon>
        <taxon>Pokkesviricetes</taxon>
        <taxon>Chitovirales</taxon>
        <taxon>Poxviridae</taxon>
        <taxon>Chordopoxvirinae</taxon>
        <taxon>Orthopoxvirus</taxon>
        <taxon>Vaccinia virus</taxon>
    </lineage>
</organism>
<feature type="chain" id="PRO_0000099718" description="Uncharacterized 8.4 kDa protein">
    <location>
        <begin position="1"/>
        <end position="72"/>
    </location>
</feature>
<keyword id="KW-1185">Reference proteome</keyword>
<reference key="1">
    <citation type="journal article" date="1990" name="Virology">
        <title>The complete DNA sequence of vaccinia virus.</title>
        <authorList>
            <person name="Goebel S.J."/>
            <person name="Johnson G.P."/>
            <person name="Perkus M.E."/>
            <person name="Davis S.W."/>
            <person name="Winslow J.P."/>
            <person name="Paoletti E."/>
        </authorList>
    </citation>
    <scope>NUCLEOTIDE SEQUENCE [LARGE SCALE GENOMIC DNA]</scope>
</reference>
<reference key="2">
    <citation type="journal article" date="1990" name="Virology">
        <title>Appendix to 'The complete DNA sequence of vaccinia virus'.</title>
        <authorList>
            <person name="Goebel S.J."/>
            <person name="Johnson G.P."/>
            <person name="Perkus M.E."/>
            <person name="Davis S.W."/>
            <person name="Winslow J.P."/>
            <person name="Paoletti E."/>
        </authorList>
    </citation>
    <scope>COMPLETE GENOME</scope>
</reference>
<dbReference type="EMBL" id="M35027">
    <property type="protein sequence ID" value="AAA48073.1"/>
    <property type="molecule type" value="Genomic_DNA"/>
</dbReference>
<dbReference type="PIR" id="G42512">
    <property type="entry name" value="G42512"/>
</dbReference>
<dbReference type="SMR" id="P20566"/>
<dbReference type="Proteomes" id="UP000008269">
    <property type="component" value="Segment"/>
</dbReference>
<name>YVGB_VACCC</name>
<sequence length="72" mass="8369">MAQMFTDPPKAAKIYINSSVESTFIDTSSLNSEKYATIWRSLSIFIRMLILNFCKLFKVKWLQNSVVLQFLT</sequence>
<organismHost>
    <name type="scientific">Homo sapiens</name>
    <name type="common">Human</name>
    <dbReference type="NCBI Taxonomy" id="9606"/>
</organismHost>
<accession>P20566</accession>
<protein>
    <recommendedName>
        <fullName>Uncharacterized 8.4 kDa protein</fullName>
    </recommendedName>
</protein>
<proteinExistence type="predicted"/>
<gene>
    <name type="ORF">G ORF B</name>
</gene>